<reference key="1">
    <citation type="journal article" date="1995" name="J. Biol. Chem.">
        <title>An essential yeast gene encoding a homolog of ubiquitin-activating enzyme.</title>
        <authorList>
            <person name="Dohmen R.J."/>
            <person name="Stappen R."/>
            <person name="McGrath J.P."/>
            <person name="Forrova H."/>
            <person name="Kolarov J."/>
            <person name="Goffeau A."/>
            <person name="Varshavsky A."/>
        </authorList>
    </citation>
    <scope>NUCLEOTIDE SEQUENCE [GENOMIC DNA]</scope>
</reference>
<reference key="2">
    <citation type="submission" date="1994-02" db="EMBL/GenBank/DDBJ databases">
        <authorList>
            <person name="Kolarov J."/>
        </authorList>
    </citation>
    <scope>NUCLEOTIDE SEQUENCE [GENOMIC DNA]</scope>
</reference>
<reference key="3">
    <citation type="submission" date="1997-02" db="EMBL/GenBank/DDBJ databases">
        <authorList>
            <person name="del Olmo M."/>
            <person name="Gross S."/>
            <person name="Moore C.L."/>
        </authorList>
    </citation>
    <scope>NUCLEOTIDE SEQUENCE [GENOMIC DNA]</scope>
    <source>
        <strain>ATCC 200060 / W303</strain>
    </source>
</reference>
<reference key="4">
    <citation type="journal article" date="1997" name="Nature">
        <title>The nucleotide sequence of Saccharomyces cerevisiae chromosome IV.</title>
        <authorList>
            <person name="Jacq C."/>
            <person name="Alt-Moerbe J."/>
            <person name="Andre B."/>
            <person name="Arnold W."/>
            <person name="Bahr A."/>
            <person name="Ballesta J.P.G."/>
            <person name="Bargues M."/>
            <person name="Baron L."/>
            <person name="Becker A."/>
            <person name="Biteau N."/>
            <person name="Bloecker H."/>
            <person name="Blugeon C."/>
            <person name="Boskovic J."/>
            <person name="Brandt P."/>
            <person name="Brueckner M."/>
            <person name="Buitrago M.J."/>
            <person name="Coster F."/>
            <person name="Delaveau T."/>
            <person name="del Rey F."/>
            <person name="Dujon B."/>
            <person name="Eide L.G."/>
            <person name="Garcia-Cantalejo J.M."/>
            <person name="Goffeau A."/>
            <person name="Gomez-Peris A."/>
            <person name="Granotier C."/>
            <person name="Hanemann V."/>
            <person name="Hankeln T."/>
            <person name="Hoheisel J.D."/>
            <person name="Jaeger W."/>
            <person name="Jimenez A."/>
            <person name="Jonniaux J.-L."/>
            <person name="Kraemer C."/>
            <person name="Kuester H."/>
            <person name="Laamanen P."/>
            <person name="Legros Y."/>
            <person name="Louis E.J."/>
            <person name="Moeller-Rieker S."/>
            <person name="Monnet A."/>
            <person name="Moro M."/>
            <person name="Mueller-Auer S."/>
            <person name="Nussbaumer B."/>
            <person name="Paricio N."/>
            <person name="Paulin L."/>
            <person name="Perea J."/>
            <person name="Perez-Alonso M."/>
            <person name="Perez-Ortin J.E."/>
            <person name="Pohl T.M."/>
            <person name="Prydz H."/>
            <person name="Purnelle B."/>
            <person name="Rasmussen S.W."/>
            <person name="Remacha M.A."/>
            <person name="Revuelta J.L."/>
            <person name="Rieger M."/>
            <person name="Salom D."/>
            <person name="Saluz H.P."/>
            <person name="Saiz J.E."/>
            <person name="Saren A.-M."/>
            <person name="Schaefer M."/>
            <person name="Scharfe M."/>
            <person name="Schmidt E.R."/>
            <person name="Schneider C."/>
            <person name="Scholler P."/>
            <person name="Schwarz S."/>
            <person name="Soler-Mira A."/>
            <person name="Urrestarazu L.A."/>
            <person name="Verhasselt P."/>
            <person name="Vissers S."/>
            <person name="Voet M."/>
            <person name="Volckaert G."/>
            <person name="Wagner G."/>
            <person name="Wambutt R."/>
            <person name="Wedler E."/>
            <person name="Wedler H."/>
            <person name="Woelfl S."/>
            <person name="Harris D.E."/>
            <person name="Bowman S."/>
            <person name="Brown D."/>
            <person name="Churcher C.M."/>
            <person name="Connor R."/>
            <person name="Dedman K."/>
            <person name="Gentles S."/>
            <person name="Hamlin N."/>
            <person name="Hunt S."/>
            <person name="Jones L."/>
            <person name="McDonald S."/>
            <person name="Murphy L.D."/>
            <person name="Niblett D."/>
            <person name="Odell C."/>
            <person name="Oliver K."/>
            <person name="Rajandream M.A."/>
            <person name="Richards C."/>
            <person name="Shore L."/>
            <person name="Walsh S.V."/>
            <person name="Barrell B.G."/>
            <person name="Dietrich F.S."/>
            <person name="Mulligan J.T."/>
            <person name="Allen E."/>
            <person name="Araujo R."/>
            <person name="Aviles E."/>
            <person name="Berno A."/>
            <person name="Carpenter J."/>
            <person name="Chen E."/>
            <person name="Cherry J.M."/>
            <person name="Chung E."/>
            <person name="Duncan M."/>
            <person name="Hunicke-Smith S."/>
            <person name="Hyman R.W."/>
            <person name="Komp C."/>
            <person name="Lashkari D."/>
            <person name="Lew H."/>
            <person name="Lin D."/>
            <person name="Mosedale D."/>
            <person name="Nakahara K."/>
            <person name="Namath A."/>
            <person name="Oefner P."/>
            <person name="Oh C."/>
            <person name="Petel F.X."/>
            <person name="Roberts D."/>
            <person name="Schramm S."/>
            <person name="Schroeder M."/>
            <person name="Shogren T."/>
            <person name="Shroff N."/>
            <person name="Winant A."/>
            <person name="Yelton M.A."/>
            <person name="Botstein D."/>
            <person name="Davis R.W."/>
            <person name="Johnston M."/>
            <person name="Andrews S."/>
            <person name="Brinkman R."/>
            <person name="Cooper J."/>
            <person name="Ding H."/>
            <person name="Du Z."/>
            <person name="Favello A."/>
            <person name="Fulton L."/>
            <person name="Gattung S."/>
            <person name="Greco T."/>
            <person name="Hallsworth K."/>
            <person name="Hawkins J."/>
            <person name="Hillier L.W."/>
            <person name="Jier M."/>
            <person name="Johnson D."/>
            <person name="Johnston L."/>
            <person name="Kirsten J."/>
            <person name="Kucaba T."/>
            <person name="Langston Y."/>
            <person name="Latreille P."/>
            <person name="Le T."/>
            <person name="Mardis E."/>
            <person name="Menezes S."/>
            <person name="Miller N."/>
            <person name="Nhan M."/>
            <person name="Pauley A."/>
            <person name="Peluso D."/>
            <person name="Rifkin L."/>
            <person name="Riles L."/>
            <person name="Taich A."/>
            <person name="Trevaskis E."/>
            <person name="Vignati D."/>
            <person name="Wilcox L."/>
            <person name="Wohldman P."/>
            <person name="Vaudin M."/>
            <person name="Wilson R."/>
            <person name="Waterston R."/>
            <person name="Albermann K."/>
            <person name="Hani J."/>
            <person name="Heumann K."/>
            <person name="Kleine K."/>
            <person name="Mewes H.-W."/>
            <person name="Zollner A."/>
            <person name="Zaccaria P."/>
        </authorList>
    </citation>
    <scope>NUCLEOTIDE SEQUENCE [LARGE SCALE GENOMIC DNA]</scope>
    <source>
        <strain>ATCC 204508 / S288c</strain>
    </source>
</reference>
<reference key="5">
    <citation type="journal article" date="2014" name="G3 (Bethesda)">
        <title>The reference genome sequence of Saccharomyces cerevisiae: Then and now.</title>
        <authorList>
            <person name="Engel S.R."/>
            <person name="Dietrich F.S."/>
            <person name="Fisk D.G."/>
            <person name="Binkley G."/>
            <person name="Balakrishnan R."/>
            <person name="Costanzo M.C."/>
            <person name="Dwight S.S."/>
            <person name="Hitz B.C."/>
            <person name="Karra K."/>
            <person name="Nash R.S."/>
            <person name="Weng S."/>
            <person name="Wong E.D."/>
            <person name="Lloyd P."/>
            <person name="Skrzypek M.S."/>
            <person name="Miyasato S.R."/>
            <person name="Simison M."/>
            <person name="Cherry J.M."/>
        </authorList>
    </citation>
    <scope>GENOME REANNOTATION</scope>
    <source>
        <strain>ATCC 204508 / S288c</strain>
    </source>
</reference>
<reference key="6">
    <citation type="journal article" date="1997" name="EMBO J.">
        <title>The ubiquitin-like protein Smt3p is activated for conjugation to other proteins by an Aos1p/Uba2p heterodimer.</title>
        <authorList>
            <person name="Johnson E.S."/>
            <person name="Schwienhorst I."/>
            <person name="Dohmen R.J."/>
            <person name="Blobel G."/>
        </authorList>
    </citation>
    <scope>FUNCTION</scope>
</reference>
<reference key="7">
    <citation type="journal article" date="2003" name="Nature">
        <title>Global analysis of protein expression in yeast.</title>
        <authorList>
            <person name="Ghaemmaghami S."/>
            <person name="Huh W.-K."/>
            <person name="Bower K."/>
            <person name="Howson R.W."/>
            <person name="Belle A."/>
            <person name="Dephoure N."/>
            <person name="O'Shea E.K."/>
            <person name="Weissman J.S."/>
        </authorList>
    </citation>
    <scope>LEVEL OF PROTEIN EXPRESSION [LARGE SCALE ANALYSIS]</scope>
</reference>
<reference key="8">
    <citation type="journal article" date="2009" name="Science">
        <title>Global analysis of Cdk1 substrate phosphorylation sites provides insights into evolution.</title>
        <authorList>
            <person name="Holt L.J."/>
            <person name="Tuch B.B."/>
            <person name="Villen J."/>
            <person name="Johnson A.D."/>
            <person name="Gygi S.P."/>
            <person name="Morgan D.O."/>
        </authorList>
    </citation>
    <scope>IDENTIFICATION BY MASS SPECTROMETRY [LARGE SCALE ANALYSIS]</scope>
</reference>
<protein>
    <recommendedName>
        <fullName>Ubiquitin-activating enzyme E1-like</fullName>
    </recommendedName>
    <alternativeName>
        <fullName>Polymerase-interacting protein 2</fullName>
    </alternativeName>
    <alternativeName>
        <fullName>SMT3-activating enzyme subunit 2</fullName>
    </alternativeName>
</protein>
<name>UBA2_YEAST</name>
<feature type="chain" id="PRO_0000194979" description="Ubiquitin-activating enzyme E1-like">
    <location>
        <begin position="1"/>
        <end position="636"/>
    </location>
</feature>
<feature type="region of interest" description="Disordered" evidence="4">
    <location>
        <begin position="581"/>
        <end position="636"/>
    </location>
</feature>
<feature type="short sequence motif" description="Nuclear localization signal" evidence="2">
    <location>
        <begin position="619"/>
        <end position="622"/>
    </location>
</feature>
<feature type="compositionally biased region" description="Acidic residues" evidence="4">
    <location>
        <begin position="586"/>
        <end position="595"/>
    </location>
</feature>
<feature type="compositionally biased region" description="Polar residues" evidence="4">
    <location>
        <begin position="626"/>
        <end position="636"/>
    </location>
</feature>
<feature type="active site" description="Glycyl thioester intermediate" evidence="3">
    <location>
        <position position="177"/>
    </location>
</feature>
<feature type="binding site" evidence="1">
    <location>
        <begin position="28"/>
        <end position="33"/>
    </location>
    <ligand>
        <name>ATP</name>
        <dbReference type="ChEBI" id="CHEBI:30616"/>
    </ligand>
</feature>
<feature type="binding site" evidence="1">
    <location>
        <position position="52"/>
    </location>
    <ligand>
        <name>ATP</name>
        <dbReference type="ChEBI" id="CHEBI:30616"/>
    </ligand>
</feature>
<feature type="binding site" evidence="1">
    <location>
        <begin position="60"/>
        <end position="63"/>
    </location>
    <ligand>
        <name>ATP</name>
        <dbReference type="ChEBI" id="CHEBI:30616"/>
    </ligand>
</feature>
<feature type="binding site" evidence="1">
    <location>
        <position position="76"/>
    </location>
    <ligand>
        <name>ATP</name>
        <dbReference type="ChEBI" id="CHEBI:30616"/>
    </ligand>
</feature>
<feature type="binding site" evidence="1">
    <location>
        <begin position="121"/>
        <end position="126"/>
    </location>
    <ligand>
        <name>ATP</name>
        <dbReference type="ChEBI" id="CHEBI:30616"/>
    </ligand>
</feature>
<feature type="binding site" evidence="1">
    <location>
        <position position="162"/>
    </location>
    <ligand>
        <name>Zn(2+)</name>
        <dbReference type="ChEBI" id="CHEBI:29105"/>
    </ligand>
</feature>
<feature type="binding site" evidence="1">
    <location>
        <position position="165"/>
    </location>
    <ligand>
        <name>Zn(2+)</name>
        <dbReference type="ChEBI" id="CHEBI:29105"/>
    </ligand>
</feature>
<feature type="binding site" evidence="1">
    <location>
        <position position="435"/>
    </location>
    <ligand>
        <name>Zn(2+)</name>
        <dbReference type="ChEBI" id="CHEBI:29105"/>
    </ligand>
</feature>
<feature type="binding site" evidence="1">
    <location>
        <position position="438"/>
    </location>
    <ligand>
        <name>Zn(2+)</name>
        <dbReference type="ChEBI" id="CHEBI:29105"/>
    </ligand>
</feature>
<feature type="mutagenesis site" description="Loss of function.">
    <original>C</original>
    <variation>A</variation>
    <variation>S</variation>
    <location>
        <position position="177"/>
    </location>
</feature>
<feature type="strand" evidence="9">
    <location>
        <begin position="442"/>
        <end position="448"/>
    </location>
</feature>
<feature type="helix" evidence="9">
    <location>
        <begin position="450"/>
        <end position="455"/>
    </location>
</feature>
<feature type="helix" evidence="9">
    <location>
        <begin position="458"/>
        <end position="469"/>
    </location>
</feature>
<feature type="strand" evidence="9">
    <location>
        <begin position="473"/>
        <end position="479"/>
    </location>
</feature>
<feature type="turn" evidence="9">
    <location>
        <begin position="480"/>
        <end position="483"/>
    </location>
</feature>
<feature type="strand" evidence="9">
    <location>
        <begin position="484"/>
        <end position="488"/>
    </location>
</feature>
<feature type="turn" evidence="9">
    <location>
        <begin position="493"/>
        <end position="496"/>
    </location>
</feature>
<feature type="turn" evidence="9">
    <location>
        <begin position="499"/>
        <end position="503"/>
    </location>
</feature>
<feature type="strand" evidence="9">
    <location>
        <begin position="509"/>
        <end position="515"/>
    </location>
</feature>
<feature type="strand" evidence="9">
    <location>
        <begin position="518"/>
        <end position="522"/>
    </location>
</feature>
<feature type="strand" evidence="9">
    <location>
        <begin position="525"/>
        <end position="531"/>
    </location>
</feature>
<feature type="strand" evidence="8">
    <location>
        <begin position="535"/>
        <end position="538"/>
    </location>
</feature>
<feature type="strand" evidence="9">
    <location>
        <begin position="549"/>
        <end position="551"/>
    </location>
</feature>
<accession>P52488</accession>
<accession>D6VT24</accession>
<evidence type="ECO:0000250" key="1"/>
<evidence type="ECO:0000255" key="2"/>
<evidence type="ECO:0000255" key="3">
    <source>
        <dbReference type="PROSITE-ProRule" id="PRU10132"/>
    </source>
</evidence>
<evidence type="ECO:0000256" key="4">
    <source>
        <dbReference type="SAM" id="MobiDB-lite"/>
    </source>
</evidence>
<evidence type="ECO:0000269" key="5">
    <source>
    </source>
</evidence>
<evidence type="ECO:0000269" key="6">
    <source>
    </source>
</evidence>
<evidence type="ECO:0000305" key="7"/>
<evidence type="ECO:0007829" key="8">
    <source>
        <dbReference type="PDB" id="3ONG"/>
    </source>
</evidence>
<evidence type="ECO:0007829" key="9">
    <source>
        <dbReference type="PDB" id="3ONH"/>
    </source>
</evidence>
<organism>
    <name type="scientific">Saccharomyces cerevisiae (strain ATCC 204508 / S288c)</name>
    <name type="common">Baker's yeast</name>
    <dbReference type="NCBI Taxonomy" id="559292"/>
    <lineage>
        <taxon>Eukaryota</taxon>
        <taxon>Fungi</taxon>
        <taxon>Dikarya</taxon>
        <taxon>Ascomycota</taxon>
        <taxon>Saccharomycotina</taxon>
        <taxon>Saccharomycetes</taxon>
        <taxon>Saccharomycetales</taxon>
        <taxon>Saccharomycetaceae</taxon>
        <taxon>Saccharomyces</taxon>
    </lineage>
</organism>
<comment type="function">
    <text evidence="6">The dimeric enzyme acts as a SMT3 E1 ligase. It mediates ATP-dependent activation of SMT3 and formation of a thioester with a conserved cysteine residue on AOS1.</text>
</comment>
<comment type="pathway">
    <text>Protein modification; protein sumoylation.</text>
</comment>
<comment type="subunit">
    <text>Heterodimer of UBA2 and AOS1. The complex binds SMT3.</text>
</comment>
<comment type="interaction">
    <interactant intactId="EBI-19710">
        <id>P52488</id>
    </interactant>
    <interactant intactId="EBI-15107">
        <id>Q06624</id>
        <label>AOS1</label>
    </interactant>
    <organismsDiffer>false</organismsDiffer>
    <experiments>4</experiments>
</comment>
<comment type="interaction">
    <interactant intactId="EBI-19710">
        <id>P52488</id>
    </interactant>
    <interactant intactId="EBI-17490">
        <id>Q12306</id>
        <label>SMT3</label>
    </interactant>
    <organismsDiffer>false</organismsDiffer>
    <experiments>2</experiments>
</comment>
<comment type="subcellular location">
    <subcellularLocation>
        <location>Nucleus</location>
    </subcellularLocation>
</comment>
<comment type="PTM">
    <text>Multiubiquitinated in vivo.</text>
</comment>
<comment type="miscellaneous">
    <text evidence="5">Present with 18800 molecules/cell in log phase SD medium.</text>
</comment>
<comment type="similarity">
    <text evidence="7">Belongs to the ubiquitin-activating E1 family.</text>
</comment>
<comment type="sequence caution" evidence="7">
    <conflict type="frameshift">
        <sequence resource="EMBL-CDS" id="CAA82980"/>
    </conflict>
</comment>
<gene>
    <name type="primary">UBA2</name>
    <name type="synonym">PIP2</name>
    <name type="synonym">UAL1</name>
    <name type="ordered locus">YDR390C</name>
    <name type="ORF">D9509.10</name>
</gene>
<proteinExistence type="evidence at protein level"/>
<dbReference type="EMBL" id="Z48725">
    <property type="protein sequence ID" value="CAA88617.1"/>
    <property type="molecule type" value="Genomic_DNA"/>
</dbReference>
<dbReference type="EMBL" id="Z30326">
    <property type="protein sequence ID" value="CAA82980.1"/>
    <property type="status" value="ALT_FRAME"/>
    <property type="molecule type" value="Genomic_DNA"/>
</dbReference>
<dbReference type="EMBL" id="U17263">
    <property type="protein sequence ID" value="AAB46626.1"/>
    <property type="molecule type" value="Genomic_DNA"/>
</dbReference>
<dbReference type="EMBL" id="U32274">
    <property type="protein sequence ID" value="AAB64832.1"/>
    <property type="molecule type" value="Genomic_DNA"/>
</dbReference>
<dbReference type="EMBL" id="BK006938">
    <property type="protein sequence ID" value="DAA12234.1"/>
    <property type="molecule type" value="Genomic_DNA"/>
</dbReference>
<dbReference type="PIR" id="A57178">
    <property type="entry name" value="A57178"/>
</dbReference>
<dbReference type="RefSeq" id="NP_010678.3">
    <property type="nucleotide sequence ID" value="NM_001180698.3"/>
</dbReference>
<dbReference type="PDB" id="3ONG">
    <property type="method" value="X-ray"/>
    <property type="resolution" value="2.30 A"/>
    <property type="chains" value="A/C=439-563"/>
</dbReference>
<dbReference type="PDB" id="3ONH">
    <property type="method" value="X-ray"/>
    <property type="resolution" value="1.60 A"/>
    <property type="chains" value="A=439-563"/>
</dbReference>
<dbReference type="PDBsum" id="3ONG"/>
<dbReference type="PDBsum" id="3ONH"/>
<dbReference type="SMR" id="P52488"/>
<dbReference type="BioGRID" id="32451">
    <property type="interactions" value="36"/>
</dbReference>
<dbReference type="ComplexPortal" id="CPX-3238">
    <property type="entry name" value="SUMO activating enzyme complex"/>
</dbReference>
<dbReference type="DIP" id="DIP-2296N"/>
<dbReference type="FunCoup" id="P52488">
    <property type="interactions" value="2486"/>
</dbReference>
<dbReference type="IntAct" id="P52488">
    <property type="interactions" value="10"/>
</dbReference>
<dbReference type="MINT" id="P52488"/>
<dbReference type="STRING" id="4932.YDR390C"/>
<dbReference type="iPTMnet" id="P52488"/>
<dbReference type="PaxDb" id="4932-YDR390C"/>
<dbReference type="PeptideAtlas" id="P52488"/>
<dbReference type="TopDownProteomics" id="P52488"/>
<dbReference type="EnsemblFungi" id="YDR390C_mRNA">
    <property type="protein sequence ID" value="YDR390C"/>
    <property type="gene ID" value="YDR390C"/>
</dbReference>
<dbReference type="GeneID" id="851998"/>
<dbReference type="KEGG" id="sce:YDR390C"/>
<dbReference type="AGR" id="SGD:S000002798"/>
<dbReference type="SGD" id="S000002798">
    <property type="gene designation" value="UBA2"/>
</dbReference>
<dbReference type="VEuPathDB" id="FungiDB:YDR390C"/>
<dbReference type="eggNOG" id="KOG2013">
    <property type="taxonomic scope" value="Eukaryota"/>
</dbReference>
<dbReference type="GeneTree" id="ENSGT00550000074924"/>
<dbReference type="HOGENOM" id="CLU_013325_7_3_1"/>
<dbReference type="InParanoid" id="P52488"/>
<dbReference type="OMA" id="PGKTECF"/>
<dbReference type="OrthoDB" id="10255449at2759"/>
<dbReference type="BioCyc" id="YEAST:G3O-29938-MONOMER"/>
<dbReference type="BRENDA" id="6.2.1.45">
    <property type="organism ID" value="984"/>
</dbReference>
<dbReference type="Reactome" id="R-SCE-3065676">
    <property type="pathway name" value="SUMO is conjugated to E1 (UBA2:SAE1)"/>
</dbReference>
<dbReference type="Reactome" id="R-SCE-3065678">
    <property type="pathway name" value="SUMO is transferred from E1 to E2 (UBE2I, UBC9)"/>
</dbReference>
<dbReference type="UniPathway" id="UPA00886"/>
<dbReference type="BioGRID-ORCS" id="851998">
    <property type="hits" value="0 hits in 10 CRISPR screens"/>
</dbReference>
<dbReference type="EvolutionaryTrace" id="P52488"/>
<dbReference type="PRO" id="PR:P52488"/>
<dbReference type="Proteomes" id="UP000002311">
    <property type="component" value="Chromosome IV"/>
</dbReference>
<dbReference type="RNAct" id="P52488">
    <property type="molecule type" value="protein"/>
</dbReference>
<dbReference type="GO" id="GO:0005737">
    <property type="term" value="C:cytoplasm"/>
    <property type="evidence" value="ECO:0000318"/>
    <property type="project" value="GO_Central"/>
</dbReference>
<dbReference type="GO" id="GO:0005634">
    <property type="term" value="C:nucleus"/>
    <property type="evidence" value="ECO:0000314"/>
    <property type="project" value="SGD"/>
</dbReference>
<dbReference type="GO" id="GO:0031510">
    <property type="term" value="C:SUMO activating enzyme complex"/>
    <property type="evidence" value="ECO:0000353"/>
    <property type="project" value="ComplexPortal"/>
</dbReference>
<dbReference type="GO" id="GO:0005524">
    <property type="term" value="F:ATP binding"/>
    <property type="evidence" value="ECO:0007669"/>
    <property type="project" value="UniProtKB-KW"/>
</dbReference>
<dbReference type="GO" id="GO:0046872">
    <property type="term" value="F:metal ion binding"/>
    <property type="evidence" value="ECO:0007669"/>
    <property type="project" value="UniProtKB-KW"/>
</dbReference>
<dbReference type="GO" id="GO:0019948">
    <property type="term" value="F:SUMO activating enzyme activity"/>
    <property type="evidence" value="ECO:0007669"/>
    <property type="project" value="InterPro"/>
</dbReference>
<dbReference type="GO" id="GO:0016925">
    <property type="term" value="P:protein sumoylation"/>
    <property type="evidence" value="ECO:0000314"/>
    <property type="project" value="SGD"/>
</dbReference>
<dbReference type="CDD" id="cd01489">
    <property type="entry name" value="Uba2_SUMO"/>
    <property type="match status" value="1"/>
</dbReference>
<dbReference type="FunFam" id="1.10.10.520:FF:000005">
    <property type="entry name" value="Ubiquitin-activating enzyme E1-like"/>
    <property type="match status" value="1"/>
</dbReference>
<dbReference type="FunFam" id="3.50.50.80:FF:000004">
    <property type="entry name" value="Ubiquitin-activating enzyme E1-like"/>
    <property type="match status" value="1"/>
</dbReference>
<dbReference type="Gene3D" id="1.10.10.520">
    <property type="entry name" value="Ubiquitin activating enzymes (Uba3). Chain: B, domain 2"/>
    <property type="match status" value="1"/>
</dbReference>
<dbReference type="Gene3D" id="3.50.50.80">
    <property type="entry name" value="Ubiquitin-activating enzyme E1, inactive adenylation domain, subdomain 1"/>
    <property type="match status" value="1"/>
</dbReference>
<dbReference type="Gene3D" id="3.10.290.20">
    <property type="entry name" value="Ubiquitin-like 2 activating enzyme e1b. Chain: B, domain 3"/>
    <property type="match status" value="1"/>
</dbReference>
<dbReference type="InterPro" id="IPR045886">
    <property type="entry name" value="ThiF/MoeB/HesA"/>
</dbReference>
<dbReference type="InterPro" id="IPR000594">
    <property type="entry name" value="ThiF_NAD_FAD-bd"/>
</dbReference>
<dbReference type="InterPro" id="IPR042449">
    <property type="entry name" value="Ub-E1_IAD_1"/>
</dbReference>
<dbReference type="InterPro" id="IPR023318">
    <property type="entry name" value="Ub_act_enz_dom_a_sf"/>
</dbReference>
<dbReference type="InterPro" id="IPR030661">
    <property type="entry name" value="Uba2"/>
</dbReference>
<dbReference type="InterPro" id="IPR019572">
    <property type="entry name" value="UBA_E1_SCCH"/>
</dbReference>
<dbReference type="InterPro" id="IPR035985">
    <property type="entry name" value="Ubiquitin-activating_enz"/>
</dbReference>
<dbReference type="InterPro" id="IPR033127">
    <property type="entry name" value="UBQ-activ_enz_E1_Cys_AS"/>
</dbReference>
<dbReference type="PANTHER" id="PTHR10953:SF5">
    <property type="entry name" value="SUMO-ACTIVATING ENZYME SUBUNIT 2"/>
    <property type="match status" value="1"/>
</dbReference>
<dbReference type="PANTHER" id="PTHR10953">
    <property type="entry name" value="UBIQUITIN-ACTIVATING ENZYME E1"/>
    <property type="match status" value="1"/>
</dbReference>
<dbReference type="Pfam" id="PF00899">
    <property type="entry name" value="ThiF"/>
    <property type="match status" value="1"/>
</dbReference>
<dbReference type="Pfam" id="PF10585">
    <property type="entry name" value="UBA_E1_SCCH"/>
    <property type="match status" value="1"/>
</dbReference>
<dbReference type="PIRSF" id="PIRSF039133">
    <property type="entry name" value="SUMO_E1B"/>
    <property type="match status" value="1"/>
</dbReference>
<dbReference type="SUPFAM" id="SSF69572">
    <property type="entry name" value="Activating enzymes of the ubiquitin-like proteins"/>
    <property type="match status" value="1"/>
</dbReference>
<dbReference type="PROSITE" id="PS00865">
    <property type="entry name" value="UBIQUITIN_ACTIVAT_2"/>
    <property type="match status" value="1"/>
</dbReference>
<keyword id="KW-0002">3D-structure</keyword>
<keyword id="KW-0067">ATP-binding</keyword>
<keyword id="KW-0436">Ligase</keyword>
<keyword id="KW-0479">Metal-binding</keyword>
<keyword id="KW-0547">Nucleotide-binding</keyword>
<keyword id="KW-0539">Nucleus</keyword>
<keyword id="KW-1185">Reference proteome</keyword>
<keyword id="KW-0832">Ubl conjugation</keyword>
<keyword id="KW-0833">Ubl conjugation pathway</keyword>
<keyword id="KW-0862">Zinc</keyword>
<sequence length="636" mass="71259">MPRETSLVTIIGEDSYKKLRSSRCLLVGAGGIGSELLKDIILMEFGEIHIVDLDTIDLSNLNRQFLFRQKDIKQPKSTTAVKAVQHFNNSKLVPYQGNVMDISTFPLHWFEQFDIIFNALDNLAARRYVNKISQFLSLPLIESGTAGFDGYMQPIIPGKTECFECTKKETPKTFPVCTIRSTPSQPIHCIVWAKNFLFNQLFASETSGNEDDNNQDWGTDDAEEIKRIKQETNELYELQKIIISRDASRIPEILNKLFIQDINKLLAIENLWKTRTKPVPLSDSQINTPTKTAQSASNSVGTIQEQISNFINITQKLMDRYPKEQNHIEFDKDDADTLEFVATAANIRSHIFNIPMKSVFDIKQIAGNIIPAIATTNAIVAGASSLISLRVLNLLKYAPTTKYTDLNMAFTAKASNLSQNRYLSNPKLAPPNKNCPVCSKVCRGVIKLSSDCLNKMKLSDFVVLIREKYSYPQDISLLDASNQRLLFDYDFEDLNDRTLSEINLGNGSIILFSDEEGDTMIRKAIELFLDVDDELPCNTCSLPDVEVPLIKANNSPSKNEEEEKNEKGADVVATTNSHGKDGIVILDDDEGEITIDAEPINGSKKRPVDTEISEAPSNKRTKLVNEPTNSDIVELD</sequence>